<keyword id="KW-0012">Acyltransferase</keyword>
<keyword id="KW-0028">Amino-acid biosynthesis</keyword>
<keyword id="KW-0055">Arginine biosynthesis</keyword>
<keyword id="KW-0068">Autocatalytic cleavage</keyword>
<keyword id="KW-0496">Mitochondrion</keyword>
<keyword id="KW-0511">Multifunctional enzyme</keyword>
<keyword id="KW-1185">Reference proteome</keyword>
<keyword id="KW-0808">Transferase</keyword>
<accession>C5E3Y4</accession>
<protein>
    <recommendedName>
        <fullName evidence="1">Arginine biosynthesis bifunctional protein ArgJ, mitochondrial</fullName>
    </recommendedName>
    <domain>
        <recommendedName>
            <fullName evidence="1">Glutamate N-acetyltransferase</fullName>
            <shortName evidence="1">GAT</shortName>
            <ecNumber evidence="1">2.3.1.35</ecNumber>
        </recommendedName>
        <alternativeName>
            <fullName evidence="1">Ornithine acetyltransferase</fullName>
            <shortName evidence="1">OATase</shortName>
        </alternativeName>
        <alternativeName>
            <fullName evidence="1">Ornithine transacetylase</fullName>
        </alternativeName>
    </domain>
    <domain>
        <recommendedName>
            <fullName evidence="1">Amino-acid acetyltransferase</fullName>
            <ecNumber evidence="1">2.3.1.1</ecNumber>
        </recommendedName>
        <alternativeName>
            <fullName evidence="1">N-acetylglutamate synthase</fullName>
            <shortName evidence="1">AGS</shortName>
        </alternativeName>
    </domain>
    <component>
        <recommendedName>
            <fullName evidence="1">Arginine biosynthesis bifunctional protein ArgJ alpha chain</fullName>
        </recommendedName>
    </component>
    <component>
        <recommendedName>
            <fullName evidence="1">Arginine biosynthesis bifunctional protein ArgJ beta chain</fullName>
        </recommendedName>
    </component>
</protein>
<name>ARGJ_ZYGRC</name>
<dbReference type="EC" id="2.3.1.35" evidence="1"/>
<dbReference type="EC" id="2.3.1.1" evidence="1"/>
<dbReference type="EMBL" id="CU928181">
    <property type="protein sequence ID" value="CAR30745.1"/>
    <property type="molecule type" value="Genomic_DNA"/>
</dbReference>
<dbReference type="RefSeq" id="XP_002499000.1">
    <property type="nucleotide sequence ID" value="XM_002498955.1"/>
</dbReference>
<dbReference type="SMR" id="C5E3Y4"/>
<dbReference type="FunCoup" id="C5E3Y4">
    <property type="interactions" value="332"/>
</dbReference>
<dbReference type="STRING" id="559307.C5E3Y4"/>
<dbReference type="MEROPS" id="T05.001"/>
<dbReference type="GeneID" id="8204532"/>
<dbReference type="KEGG" id="zro:ZYRO0E01232g"/>
<dbReference type="HOGENOM" id="CLU_027172_1_0_1"/>
<dbReference type="InParanoid" id="C5E3Y4"/>
<dbReference type="UniPathway" id="UPA00068">
    <property type="reaction ID" value="UER00106"/>
</dbReference>
<dbReference type="UniPathway" id="UPA00068">
    <property type="reaction ID" value="UER00111"/>
</dbReference>
<dbReference type="Proteomes" id="UP000008536">
    <property type="component" value="Chromosome E"/>
</dbReference>
<dbReference type="GO" id="GO:0005759">
    <property type="term" value="C:mitochondrial matrix"/>
    <property type="evidence" value="ECO:0007669"/>
    <property type="project" value="UniProtKB-SubCell"/>
</dbReference>
<dbReference type="GO" id="GO:0004358">
    <property type="term" value="F:glutamate N-acetyltransferase activity"/>
    <property type="evidence" value="ECO:0007669"/>
    <property type="project" value="UniProtKB-UniRule"/>
</dbReference>
<dbReference type="GO" id="GO:0004042">
    <property type="term" value="F:L-glutamate N-acetyltransferase activity"/>
    <property type="evidence" value="ECO:0007669"/>
    <property type="project" value="UniProtKB-UniRule"/>
</dbReference>
<dbReference type="GO" id="GO:0006526">
    <property type="term" value="P:L-arginine biosynthetic process"/>
    <property type="evidence" value="ECO:0007669"/>
    <property type="project" value="UniProtKB-UniRule"/>
</dbReference>
<dbReference type="GO" id="GO:0006592">
    <property type="term" value="P:ornithine biosynthetic process"/>
    <property type="evidence" value="ECO:0007669"/>
    <property type="project" value="TreeGrafter"/>
</dbReference>
<dbReference type="CDD" id="cd02152">
    <property type="entry name" value="OAT"/>
    <property type="match status" value="1"/>
</dbReference>
<dbReference type="FunFam" id="3.60.70.12:FF:000001">
    <property type="entry name" value="Arginine biosynthesis bifunctional protein ArgJ, chloroplastic"/>
    <property type="match status" value="1"/>
</dbReference>
<dbReference type="FunFam" id="3.10.20.340:FF:000002">
    <property type="entry name" value="Arginine biosynthesis bifunctional protein ArgJ, mitochondrial"/>
    <property type="match status" value="1"/>
</dbReference>
<dbReference type="FunFam" id="3.30.2330.10:FF:000001">
    <property type="entry name" value="Arginine biosynthesis bifunctional protein ArgJ, mitochondrial"/>
    <property type="match status" value="1"/>
</dbReference>
<dbReference type="Gene3D" id="3.30.2330.10">
    <property type="entry name" value="arginine biosynthesis bifunctional protein suprefamily"/>
    <property type="match status" value="1"/>
</dbReference>
<dbReference type="Gene3D" id="3.10.20.340">
    <property type="entry name" value="ArgJ beta chain, C-terminal domain"/>
    <property type="match status" value="1"/>
</dbReference>
<dbReference type="Gene3D" id="3.60.70.12">
    <property type="entry name" value="L-amino peptidase D-ALA esterase/amidase"/>
    <property type="match status" value="1"/>
</dbReference>
<dbReference type="HAMAP" id="MF_01106">
    <property type="entry name" value="ArgJ"/>
    <property type="match status" value="1"/>
</dbReference>
<dbReference type="InterPro" id="IPR002813">
    <property type="entry name" value="Arg_biosynth_ArgJ"/>
</dbReference>
<dbReference type="InterPro" id="IPR016117">
    <property type="entry name" value="ArgJ-like_dom_sf"/>
</dbReference>
<dbReference type="InterPro" id="IPR042195">
    <property type="entry name" value="ArgJ_beta_C"/>
</dbReference>
<dbReference type="NCBIfam" id="TIGR00120">
    <property type="entry name" value="ArgJ"/>
    <property type="match status" value="1"/>
</dbReference>
<dbReference type="NCBIfam" id="NF003802">
    <property type="entry name" value="PRK05388.1"/>
    <property type="match status" value="1"/>
</dbReference>
<dbReference type="PANTHER" id="PTHR23100">
    <property type="entry name" value="ARGININE BIOSYNTHESIS BIFUNCTIONAL PROTEIN ARGJ"/>
    <property type="match status" value="1"/>
</dbReference>
<dbReference type="PANTHER" id="PTHR23100:SF0">
    <property type="entry name" value="ARGININE BIOSYNTHESIS BIFUNCTIONAL PROTEIN ARGJ, MITOCHONDRIAL"/>
    <property type="match status" value="1"/>
</dbReference>
<dbReference type="Pfam" id="PF01960">
    <property type="entry name" value="ArgJ"/>
    <property type="match status" value="1"/>
</dbReference>
<dbReference type="SUPFAM" id="SSF56266">
    <property type="entry name" value="DmpA/ArgJ-like"/>
    <property type="match status" value="1"/>
</dbReference>
<proteinExistence type="inferred from homology"/>
<feature type="chain" id="PRO_0000398127" description="Arginine biosynthesis bifunctional protein ArgJ alpha chain" evidence="1">
    <location>
        <begin position="1"/>
        <end position="210"/>
    </location>
</feature>
<feature type="chain" id="PRO_0000398128" description="Arginine biosynthesis bifunctional protein ArgJ beta chain" evidence="1">
    <location>
        <begin position="211"/>
        <end position="437"/>
    </location>
</feature>
<feature type="active site" description="Nucleophile" evidence="1">
    <location>
        <position position="211"/>
    </location>
</feature>
<feature type="binding site" evidence="1">
    <location>
        <position position="173"/>
    </location>
    <ligand>
        <name>substrate</name>
    </ligand>
</feature>
<feature type="binding site" evidence="1">
    <location>
        <position position="200"/>
    </location>
    <ligand>
        <name>substrate</name>
    </ligand>
</feature>
<feature type="binding site" evidence="1">
    <location>
        <position position="211"/>
    </location>
    <ligand>
        <name>substrate</name>
    </ligand>
</feature>
<feature type="binding site" evidence="1">
    <location>
        <position position="297"/>
    </location>
    <ligand>
        <name>substrate</name>
    </ligand>
</feature>
<feature type="binding site" evidence="1">
    <location>
        <position position="432"/>
    </location>
    <ligand>
        <name>substrate</name>
    </ligand>
</feature>
<feature type="binding site" evidence="1">
    <location>
        <position position="437"/>
    </location>
    <ligand>
        <name>substrate</name>
    </ligand>
</feature>
<feature type="site" description="Involved in the stabilization of negative charge on the oxyanion by the formation of the oxyanion hole" evidence="1">
    <location>
        <position position="132"/>
    </location>
</feature>
<feature type="site" description="Involved in the stabilization of negative charge on the oxyanion by the formation of the oxyanion hole" evidence="1">
    <location>
        <position position="133"/>
    </location>
</feature>
<feature type="site" description="Cleavage; by autolysis" evidence="1">
    <location>
        <begin position="210"/>
        <end position="211"/>
    </location>
</feature>
<organism>
    <name type="scientific">Zygosaccharomyces rouxii (strain ATCC 2623 / CBS 732 / NBRC 1130 / NCYC 568 / NRRL Y-229)</name>
    <dbReference type="NCBI Taxonomy" id="559307"/>
    <lineage>
        <taxon>Eukaryota</taxon>
        <taxon>Fungi</taxon>
        <taxon>Dikarya</taxon>
        <taxon>Ascomycota</taxon>
        <taxon>Saccharomycotina</taxon>
        <taxon>Saccharomycetes</taxon>
        <taxon>Saccharomycetales</taxon>
        <taxon>Saccharomycetaceae</taxon>
        <taxon>Zygosaccharomyces</taxon>
    </lineage>
</organism>
<evidence type="ECO:0000255" key="1">
    <source>
        <dbReference type="HAMAP-Rule" id="MF_03124"/>
    </source>
</evidence>
<reference key="1">
    <citation type="journal article" date="2009" name="Genome Res.">
        <title>Comparative genomics of protoploid Saccharomycetaceae.</title>
        <authorList>
            <consortium name="The Genolevures Consortium"/>
            <person name="Souciet J.-L."/>
            <person name="Dujon B."/>
            <person name="Gaillardin C."/>
            <person name="Johnston M."/>
            <person name="Baret P.V."/>
            <person name="Cliften P."/>
            <person name="Sherman D.J."/>
            <person name="Weissenbach J."/>
            <person name="Westhof E."/>
            <person name="Wincker P."/>
            <person name="Jubin C."/>
            <person name="Poulain J."/>
            <person name="Barbe V."/>
            <person name="Segurens B."/>
            <person name="Artiguenave F."/>
            <person name="Anthouard V."/>
            <person name="Vacherie B."/>
            <person name="Val M.-E."/>
            <person name="Fulton R.S."/>
            <person name="Minx P."/>
            <person name="Wilson R."/>
            <person name="Durrens P."/>
            <person name="Jean G."/>
            <person name="Marck C."/>
            <person name="Martin T."/>
            <person name="Nikolski M."/>
            <person name="Rolland T."/>
            <person name="Seret M.-L."/>
            <person name="Casaregola S."/>
            <person name="Despons L."/>
            <person name="Fairhead C."/>
            <person name="Fischer G."/>
            <person name="Lafontaine I."/>
            <person name="Leh V."/>
            <person name="Lemaire M."/>
            <person name="de Montigny J."/>
            <person name="Neuveglise C."/>
            <person name="Thierry A."/>
            <person name="Blanc-Lenfle I."/>
            <person name="Bleykasten C."/>
            <person name="Diffels J."/>
            <person name="Fritsch E."/>
            <person name="Frangeul L."/>
            <person name="Goeffon A."/>
            <person name="Jauniaux N."/>
            <person name="Kachouri-Lafond R."/>
            <person name="Payen C."/>
            <person name="Potier S."/>
            <person name="Pribylova L."/>
            <person name="Ozanne C."/>
            <person name="Richard G.-F."/>
            <person name="Sacerdot C."/>
            <person name="Straub M.-L."/>
            <person name="Talla E."/>
        </authorList>
    </citation>
    <scope>NUCLEOTIDE SEQUENCE [LARGE SCALE GENOMIC DNA]</scope>
    <source>
        <strain>ATCC 2623 / CBS 732 / BCRC 21506 / NBRC 1130 / NCYC 568 / NRRL Y-229</strain>
    </source>
</reference>
<comment type="function">
    <text evidence="1">Catalyzes two activities which are involved in the cyclic version of arginine biosynthesis: the synthesis of acetylglutamate from glutamate and acetyl-CoA, and of ornithine by transacetylation between acetylornithine and glutamate.</text>
</comment>
<comment type="catalytic activity">
    <reaction evidence="1">
        <text>N(2)-acetyl-L-ornithine + L-glutamate = N-acetyl-L-glutamate + L-ornithine</text>
        <dbReference type="Rhea" id="RHEA:15349"/>
        <dbReference type="ChEBI" id="CHEBI:29985"/>
        <dbReference type="ChEBI" id="CHEBI:44337"/>
        <dbReference type="ChEBI" id="CHEBI:46911"/>
        <dbReference type="ChEBI" id="CHEBI:57805"/>
        <dbReference type="EC" id="2.3.1.35"/>
    </reaction>
</comment>
<comment type="catalytic activity">
    <reaction evidence="1">
        <text>L-glutamate + acetyl-CoA = N-acetyl-L-glutamate + CoA + H(+)</text>
        <dbReference type="Rhea" id="RHEA:24292"/>
        <dbReference type="ChEBI" id="CHEBI:15378"/>
        <dbReference type="ChEBI" id="CHEBI:29985"/>
        <dbReference type="ChEBI" id="CHEBI:44337"/>
        <dbReference type="ChEBI" id="CHEBI:57287"/>
        <dbReference type="ChEBI" id="CHEBI:57288"/>
        <dbReference type="EC" id="2.3.1.1"/>
    </reaction>
</comment>
<comment type="pathway">
    <text evidence="1">Amino-acid biosynthesis; L-arginine biosynthesis; L-ornithine and N-acetyl-L-glutamate from L-glutamate and N(2)-acetyl-L-ornithine (cyclic): step 1/1.</text>
</comment>
<comment type="pathway">
    <text evidence="1">Amino-acid biosynthesis; L-arginine biosynthesis; N(2)-acetyl-L-ornithine from L-glutamate: step 1/4.</text>
</comment>
<comment type="subunit">
    <text evidence="1">Heterodimer of an alpha and a beta chain.</text>
</comment>
<comment type="subcellular location">
    <subcellularLocation>
        <location evidence="1">Mitochondrion matrix</location>
    </subcellularLocation>
</comment>
<comment type="PTM">
    <text evidence="1">The alpha and beta chains are autoproteolytically processed from a single precursor protein within the mitochondrion.</text>
</comment>
<comment type="miscellaneous">
    <text evidence="1">This protein may be expected to contain an N-terminal transit peptide but none has been predicted.</text>
</comment>
<comment type="similarity">
    <text evidence="1">Belongs to the ArgJ family.</text>
</comment>
<sequence length="437" mass="47043">MKFSSVLKQSAKYAAHVPKSGVFPRGFQVGSIASGVKKNGNLDLGVLVNTNKSYESSAASVFTTNKFKAAPVILSQRVLEEKNGKGINAIVVNSGCANSVTGEVGLQDATQMAKLIDEKLGATSPSTLIMSTGVIGQRLQMDKISKGVSQLFANNSFGSDFNSWLNIAKSICTTDTFPKLITSNFTLKNGTQYTLTGMAKGAGMICPNMATLLGFIVTDLPIESKALSKMLKFATDRSFNCISVDGDMSTNDTINMIANGAVKTDEITEDSPEFLQVRDQVTQFAQKLAQLVVRDGEGATKFVTVKVQNSSTFADAKIIAESISNSMLVKTALYGKDANWGRILCAIGYAKLDNLDSLQTDKLNVSFVATDNSEPRELKLLVNGVPQLNIDEERASQILALPDLEVLVDLGTGNEEAQFWTCDLSHEYVTINGDYRS</sequence>
<gene>
    <name type="ordered locus">ZYRO0E01232g</name>
</gene>